<protein>
    <recommendedName>
        <fullName>Arginine deiminase</fullName>
        <shortName>ADI</shortName>
        <ecNumber>3.5.3.6</ecNumber>
    </recommendedName>
    <alternativeName>
        <fullName>Arginine dihydrolase</fullName>
        <shortName>AD</shortName>
    </alternativeName>
</protein>
<name>ARCA_MYCBO</name>
<sequence length="402" mass="43089">MGVELGSNSEVGALRVVILHRPGAELRRLTPRNTDQLLFDGLPWVSRAQDEHDEFAELLASRGAEVLLLSDLLTEALHHSGAARMQGIAAAVDAPRLGLPLAQELSAYLRSLDPGRLAHVLTAGMTFNELPSDTRTDVSLVLRMHHGGDFVIEPLPNLVFTRDSSIWIGPRVVIPSLALRARVREASLTDLIYAHHPRFTGVRRAYESRTAPVEGGDVLLLAPGVVAVGVGERTTPAGAEALARSLFDDDLAHTVLAVPIAQQRAQMHLDTVCTMVDTDTMVMYANVVDTLEAFTIQRTPDGVTIGDAAPFAEAAAKAMGIDKLRVIHTGMDPVVAEREQWDDGNNTLALAPGVVVAYERNVQTNARLQDAGIEVLTIAGSELGTGRGGPRCMSCPAARDPL</sequence>
<dbReference type="EC" id="3.5.3.6"/>
<dbReference type="EMBL" id="LT708304">
    <property type="protein sequence ID" value="SIT99628.1"/>
    <property type="molecule type" value="Genomic_DNA"/>
</dbReference>
<dbReference type="RefSeq" id="NP_854685.1">
    <property type="nucleotide sequence ID" value="NC_002945.3"/>
</dbReference>
<dbReference type="RefSeq" id="WP_003405169.1">
    <property type="nucleotide sequence ID" value="NC_002945.4"/>
</dbReference>
<dbReference type="SMR" id="P63552"/>
<dbReference type="GeneID" id="45424973"/>
<dbReference type="KEGG" id="mbo:BQ2027_MB1028"/>
<dbReference type="PATRIC" id="fig|233413.5.peg.1120"/>
<dbReference type="UniPathway" id="UPA00254">
    <property type="reaction ID" value="UER00364"/>
</dbReference>
<dbReference type="Proteomes" id="UP000001419">
    <property type="component" value="Chromosome"/>
</dbReference>
<dbReference type="GO" id="GO:0005737">
    <property type="term" value="C:cytoplasm"/>
    <property type="evidence" value="ECO:0007669"/>
    <property type="project" value="UniProtKB-SubCell"/>
</dbReference>
<dbReference type="GO" id="GO:0016990">
    <property type="term" value="F:arginine deiminase activity"/>
    <property type="evidence" value="ECO:0007669"/>
    <property type="project" value="UniProtKB-UniRule"/>
</dbReference>
<dbReference type="GO" id="GO:0019547">
    <property type="term" value="P:arginine catabolic process to ornithine"/>
    <property type="evidence" value="ECO:0007669"/>
    <property type="project" value="UniProtKB-UniRule"/>
</dbReference>
<dbReference type="GO" id="GO:0019546">
    <property type="term" value="P:arginine deiminase pathway"/>
    <property type="evidence" value="ECO:0007669"/>
    <property type="project" value="TreeGrafter"/>
</dbReference>
<dbReference type="FunFam" id="1.10.3930.10:FF:000004">
    <property type="entry name" value="Arginine deiminase"/>
    <property type="match status" value="1"/>
</dbReference>
<dbReference type="Gene3D" id="1.10.3930.10">
    <property type="entry name" value="Arginine deiminase"/>
    <property type="match status" value="1"/>
</dbReference>
<dbReference type="Gene3D" id="3.75.10.10">
    <property type="entry name" value="L-arginine/glycine Amidinotransferase, Chain A"/>
    <property type="match status" value="1"/>
</dbReference>
<dbReference type="HAMAP" id="MF_00242">
    <property type="entry name" value="Arg_deiminase"/>
    <property type="match status" value="1"/>
</dbReference>
<dbReference type="InterPro" id="IPR003876">
    <property type="entry name" value="Arg_deiminase"/>
</dbReference>
<dbReference type="NCBIfam" id="TIGR01078">
    <property type="entry name" value="arcA"/>
    <property type="match status" value="1"/>
</dbReference>
<dbReference type="NCBIfam" id="NF002381">
    <property type="entry name" value="PRK01388.1"/>
    <property type="match status" value="1"/>
</dbReference>
<dbReference type="PANTHER" id="PTHR47271">
    <property type="entry name" value="ARGININE DEIMINASE"/>
    <property type="match status" value="1"/>
</dbReference>
<dbReference type="PANTHER" id="PTHR47271:SF2">
    <property type="entry name" value="ARGININE DEIMINASE"/>
    <property type="match status" value="1"/>
</dbReference>
<dbReference type="Pfam" id="PF02274">
    <property type="entry name" value="ADI"/>
    <property type="match status" value="1"/>
</dbReference>
<dbReference type="PIRSF" id="PIRSF006356">
    <property type="entry name" value="Arg_deiminase"/>
    <property type="match status" value="1"/>
</dbReference>
<dbReference type="PRINTS" id="PR01466">
    <property type="entry name" value="ARGDEIMINASE"/>
</dbReference>
<dbReference type="SUPFAM" id="SSF55909">
    <property type="entry name" value="Pentein"/>
    <property type="match status" value="1"/>
</dbReference>
<reference key="1">
    <citation type="journal article" date="2003" name="Proc. Natl. Acad. Sci. U.S.A.">
        <title>The complete genome sequence of Mycobacterium bovis.</title>
        <authorList>
            <person name="Garnier T."/>
            <person name="Eiglmeier K."/>
            <person name="Camus J.-C."/>
            <person name="Medina N."/>
            <person name="Mansoor H."/>
            <person name="Pryor M."/>
            <person name="Duthoy S."/>
            <person name="Grondin S."/>
            <person name="Lacroix C."/>
            <person name="Monsempe C."/>
            <person name="Simon S."/>
            <person name="Harris B."/>
            <person name="Atkin R."/>
            <person name="Doggett J."/>
            <person name="Mayes R."/>
            <person name="Keating L."/>
            <person name="Wheeler P.R."/>
            <person name="Parkhill J."/>
            <person name="Barrell B.G."/>
            <person name="Cole S.T."/>
            <person name="Gordon S.V."/>
            <person name="Hewinson R.G."/>
        </authorList>
    </citation>
    <scope>NUCLEOTIDE SEQUENCE [LARGE SCALE GENOMIC DNA]</scope>
    <source>
        <strain>ATCC BAA-935 / AF2122/97</strain>
    </source>
</reference>
<reference key="2">
    <citation type="journal article" date="2017" name="Genome Announc.">
        <title>Updated reference genome sequence and annotation of Mycobacterium bovis AF2122/97.</title>
        <authorList>
            <person name="Malone K.M."/>
            <person name="Farrell D."/>
            <person name="Stuber T.P."/>
            <person name="Schubert O.T."/>
            <person name="Aebersold R."/>
            <person name="Robbe-Austerman S."/>
            <person name="Gordon S.V."/>
        </authorList>
    </citation>
    <scope>NUCLEOTIDE SEQUENCE [LARGE SCALE GENOMIC DNA]</scope>
    <scope>GENOME REANNOTATION</scope>
    <source>
        <strain>ATCC BAA-935 / AF2122/97</strain>
    </source>
</reference>
<comment type="catalytic activity">
    <reaction>
        <text>L-arginine + H2O = L-citrulline + NH4(+)</text>
        <dbReference type="Rhea" id="RHEA:19597"/>
        <dbReference type="ChEBI" id="CHEBI:15377"/>
        <dbReference type="ChEBI" id="CHEBI:28938"/>
        <dbReference type="ChEBI" id="CHEBI:32682"/>
        <dbReference type="ChEBI" id="CHEBI:57743"/>
        <dbReference type="EC" id="3.5.3.6"/>
    </reaction>
</comment>
<comment type="pathway">
    <text>Amino-acid degradation; L-arginine degradation via ADI pathway; carbamoyl phosphate from L-arginine: step 1/2.</text>
</comment>
<comment type="subcellular location">
    <subcellularLocation>
        <location evidence="2">Cytoplasm</location>
    </subcellularLocation>
</comment>
<comment type="similarity">
    <text evidence="2">Belongs to the arginine deiminase family.</text>
</comment>
<feature type="chain" id="PRO_0000182220" description="Arginine deiminase">
    <location>
        <begin position="1"/>
        <end position="402"/>
    </location>
</feature>
<feature type="active site" description="Amidino-cysteine intermediate" evidence="1">
    <location>
        <position position="392"/>
    </location>
</feature>
<proteinExistence type="inferred from homology"/>
<accession>P63552</accession>
<accession>A0A1R3XX12</accession>
<accession>O05585</accession>
<accession>X2BGU7</accession>
<evidence type="ECO:0000250" key="1"/>
<evidence type="ECO:0000305" key="2"/>
<gene>
    <name type="primary">arcA</name>
    <name type="ordered locus">BQ2027_MB1028</name>
</gene>
<keyword id="KW-0056">Arginine metabolism</keyword>
<keyword id="KW-0963">Cytoplasm</keyword>
<keyword id="KW-0378">Hydrolase</keyword>
<keyword id="KW-1185">Reference proteome</keyword>
<organism>
    <name type="scientific">Mycobacterium bovis (strain ATCC BAA-935 / AF2122/97)</name>
    <dbReference type="NCBI Taxonomy" id="233413"/>
    <lineage>
        <taxon>Bacteria</taxon>
        <taxon>Bacillati</taxon>
        <taxon>Actinomycetota</taxon>
        <taxon>Actinomycetes</taxon>
        <taxon>Mycobacteriales</taxon>
        <taxon>Mycobacteriaceae</taxon>
        <taxon>Mycobacterium</taxon>
        <taxon>Mycobacterium tuberculosis complex</taxon>
    </lineage>
</organism>